<keyword id="KW-0646">Protease inhibitor</keyword>
<keyword id="KW-1185">Reference proteome</keyword>
<keyword id="KW-0964">Secreted</keyword>
<keyword id="KW-0722">Serine protease inhibitor</keyword>
<keyword id="KW-0732">Signal</keyword>
<feature type="signal peptide" evidence="2">
    <location>
        <begin position="1"/>
        <end position="22"/>
    </location>
</feature>
<feature type="propeptide" id="PRO_0000025304" evidence="2">
    <location>
        <begin position="23"/>
        <end position="36"/>
    </location>
</feature>
<feature type="chain" id="PRO_0000025305" description="Proteinase inhibitor I-A">
    <location>
        <begin position="37"/>
        <end position="107"/>
    </location>
</feature>
<feature type="site" description="Reactive bond" evidence="1">
    <location>
        <begin position="83"/>
        <end position="84"/>
    </location>
</feature>
<sequence>MVKFAHVVAFLLLASLIQPLTARDLEINVLQLDVSQSGCPGVTKERWPELLGTPAKFAMQIIQKENPKLTNVQTILNGGPVTEDLRCNRVRLFVNVLDFIVQTPQIG</sequence>
<proteinExistence type="evidence at transcript level"/>
<name>IPIA_TOBAC</name>
<reference key="1">
    <citation type="journal article" date="1993" name="Plant Mol. Biol.">
        <title>Tobacco proteinase inhibitor I genes are locally, but not systemically induced by stress.</title>
        <authorList>
            <person name="Linthorst H.J.M."/>
            <person name="Brederode F.T."/>
            <person name="van der Does C."/>
            <person name="Bol J.F."/>
        </authorList>
    </citation>
    <scope>NUCLEOTIDE SEQUENCE [MRNA]</scope>
</reference>
<reference key="2">
    <citation type="journal article" date="1993" name="J. Biol. Chem.">
        <title>cDNA cloning and gene expression analysis of the microbial proteinase inhibitor of tobacco.</title>
        <authorList>
            <person name="Heitz T."/>
            <person name="Geoffroy P."/>
            <person name="Stintzi A."/>
            <person name="Fritig B."/>
            <person name="Legrand M."/>
        </authorList>
    </citation>
    <scope>NUCLEOTIDE SEQUENCE [MRNA]</scope>
    <source>
        <strain>cv. Samsun NN</strain>
        <tissue>Leaf</tissue>
    </source>
</reference>
<dbReference type="EMBL" id="Z12619">
    <property type="protein sequence ID" value="CAA78265.1"/>
    <property type="molecule type" value="mRNA"/>
</dbReference>
<dbReference type="EMBL" id="X67075">
    <property type="protein sequence ID" value="CAA47460.1"/>
    <property type="molecule type" value="mRNA"/>
</dbReference>
<dbReference type="PIR" id="S33546">
    <property type="entry name" value="B47487"/>
</dbReference>
<dbReference type="RefSeq" id="XP_016464920.1">
    <property type="nucleotide sequence ID" value="XM_016609434.1"/>
</dbReference>
<dbReference type="SMR" id="Q03198"/>
<dbReference type="PaxDb" id="4097-Q03198"/>
<dbReference type="KEGG" id="nta:107787825"/>
<dbReference type="OMA" id="ERENHNV"/>
<dbReference type="OrthoDB" id="10013825at2759"/>
<dbReference type="PhylomeDB" id="Q03198"/>
<dbReference type="Proteomes" id="UP000084051">
    <property type="component" value="Unplaced"/>
</dbReference>
<dbReference type="GO" id="GO:0005576">
    <property type="term" value="C:extracellular region"/>
    <property type="evidence" value="ECO:0007669"/>
    <property type="project" value="UniProtKB-SubCell"/>
</dbReference>
<dbReference type="GO" id="GO:0004867">
    <property type="term" value="F:serine-type endopeptidase inhibitor activity"/>
    <property type="evidence" value="ECO:0007669"/>
    <property type="project" value="UniProtKB-KW"/>
</dbReference>
<dbReference type="GO" id="GO:0009611">
    <property type="term" value="P:response to wounding"/>
    <property type="evidence" value="ECO:0007669"/>
    <property type="project" value="InterPro"/>
</dbReference>
<dbReference type="Gene3D" id="3.30.10.10">
    <property type="entry name" value="Trypsin Inhibitor V, subunit A"/>
    <property type="match status" value="1"/>
</dbReference>
<dbReference type="InterPro" id="IPR000864">
    <property type="entry name" value="Prot_inh_pot1"/>
</dbReference>
<dbReference type="InterPro" id="IPR036354">
    <property type="entry name" value="Prot_inh_pot1_sf"/>
</dbReference>
<dbReference type="PANTHER" id="PTHR33091:SF84">
    <property type="entry name" value="ETHYLENE-RESPONSIVE PROTEINASE INHIBITOR 1"/>
    <property type="match status" value="1"/>
</dbReference>
<dbReference type="PANTHER" id="PTHR33091">
    <property type="entry name" value="PROTEIN, PUTATIVE, EXPRESSED-RELATED"/>
    <property type="match status" value="1"/>
</dbReference>
<dbReference type="Pfam" id="PF00280">
    <property type="entry name" value="potato_inhibit"/>
    <property type="match status" value="1"/>
</dbReference>
<dbReference type="PRINTS" id="PR00292">
    <property type="entry name" value="POTATOINHBTR"/>
</dbReference>
<dbReference type="SUPFAM" id="SSF54654">
    <property type="entry name" value="CI-2 family of serine protease inhibitors"/>
    <property type="match status" value="1"/>
</dbReference>
<dbReference type="PROSITE" id="PS00285">
    <property type="entry name" value="POTATO_INHIBITOR"/>
    <property type="match status" value="1"/>
</dbReference>
<organism>
    <name type="scientific">Nicotiana tabacum</name>
    <name type="common">Common tobacco</name>
    <dbReference type="NCBI Taxonomy" id="4097"/>
    <lineage>
        <taxon>Eukaryota</taxon>
        <taxon>Viridiplantae</taxon>
        <taxon>Streptophyta</taxon>
        <taxon>Embryophyta</taxon>
        <taxon>Tracheophyta</taxon>
        <taxon>Spermatophyta</taxon>
        <taxon>Magnoliopsida</taxon>
        <taxon>eudicotyledons</taxon>
        <taxon>Gunneridae</taxon>
        <taxon>Pentapetalae</taxon>
        <taxon>asterids</taxon>
        <taxon>lamiids</taxon>
        <taxon>Solanales</taxon>
        <taxon>Solanaceae</taxon>
        <taxon>Nicotianoideae</taxon>
        <taxon>Nicotianeae</taxon>
        <taxon>Nicotiana</taxon>
    </lineage>
</organism>
<gene>
    <name type="primary">TIMPB</name>
</gene>
<accession>Q03198</accession>
<comment type="subcellular location">
    <subcellularLocation>
        <location evidence="3">Secreted</location>
    </subcellularLocation>
</comment>
<comment type="induction">
    <text>By tobacco mosaic virus infection, wounding, UV light, salicylic acid and ethylene.</text>
</comment>
<comment type="similarity">
    <text evidence="3">Belongs to the protease inhibitor I13 (potato type I serine protease inhibitor) family.</text>
</comment>
<protein>
    <recommendedName>
        <fullName>Proteinase inhibitor I-A</fullName>
        <shortName>PI-IA</shortName>
    </recommendedName>
    <alternativeName>
        <fullName>Inhibitor of microbial serine proteinases minor isoform</fullName>
    </alternativeName>
</protein>
<evidence type="ECO:0000250" key="1"/>
<evidence type="ECO:0000255" key="2"/>
<evidence type="ECO:0000305" key="3"/>